<name>GCSP_SHISS</name>
<protein>
    <recommendedName>
        <fullName evidence="1">Glycine dehydrogenase (decarboxylating)</fullName>
        <ecNumber evidence="1">1.4.4.2</ecNumber>
    </recommendedName>
    <alternativeName>
        <fullName evidence="1">Glycine cleavage system P-protein</fullName>
    </alternativeName>
    <alternativeName>
        <fullName evidence="1">Glycine decarboxylase</fullName>
    </alternativeName>
    <alternativeName>
        <fullName evidence="1">Glycine dehydrogenase (aminomethyl-transferring)</fullName>
    </alternativeName>
</protein>
<sequence>MTQTLSQLENSGAFIERHIGPDAAQQQEMLNAVGAQSLNALTGQIVPKDIQLATPPQVGAPATEYAALAELKAIASRNKRFTSYIGMGYTAVQLPPVILRNMLENPGWYTAYTPYQPEVSQGRLEALLNFQQVTLDLTGLDMASASLLDEATAAAEAMAMAKRVSKLKNANRFFVASDVHPQTLDVVRTRAETFGFEVIVDDAQKVLDHQDVFGVLLQQVGTTGEIHDYTALISELKSRKIVVSVAADIMALVLLTAPGKQGADIVFGSAQRFGVPMGYGGPHAAFFAAKDEYKRSMPGRIIGVSKDAAGNTALRMAMQTREQHIRREKANSNICTSQVLLANIASLYAVYHGPVGLKRIANRIHRLTDILAAGLQQKGLKLRHAHYFDTLCVEVADKAGVLTRAEAAEINLRSDILNAVGITLDETTTRENVMQLFSVLLGDNHGLEIDTLDKDVAHDSRSIQPAMLRDDEILTHPVFNRYHSETEMMRYMHSLERKDLALNQAMIPLGSCTMKLNAAAEMIPITWPEFAELHPFCPPEQAEGYQQMIAQLADWLVKLTGYDAVCMQPNSGAQGEYAGLLAIRHYHESRNEGHRDICLIPASAHGTNPASAHMAGMQVVVVACDKNGNIDLTDLRAKAEQAGDNLSCIMVTYPSTHGVYEETIREVCEVVHQFGGQVYLDGANMNAQVGITSPGFIGADVSHLNLHKTFCIPHGGGGPGMGPIGVKAHLAPFVPGHSVVQIEGMLTRQGAVSAAPFGSASILPISWMYIRMMGAEGLKKASQVAILNANYIASRLQDAFPVLYTGRDGRVAHECILDIRPLKEETGISELDIAKRLIDYGFHAPTMSFPVAGTLMVEPTESESKVELDRFIDAMLAIRAEIDQVKAAVWPLEDNPLVNAPHIQSELVAEWAHPYSREVAVFPAGVADKYWPTVKRLDDVYGDRNLFCSCVPISEYQ</sequence>
<accession>Q3YXW7</accession>
<comment type="function">
    <text evidence="1">The glycine cleavage system catalyzes the degradation of glycine. The P protein binds the alpha-amino group of glycine through its pyridoxal phosphate cofactor; CO(2) is released and the remaining methylamine moiety is then transferred to the lipoamide cofactor of the H protein.</text>
</comment>
<comment type="catalytic activity">
    <reaction evidence="1">
        <text>N(6)-[(R)-lipoyl]-L-lysyl-[glycine-cleavage complex H protein] + glycine + H(+) = N(6)-[(R)-S(8)-aminomethyldihydrolipoyl]-L-lysyl-[glycine-cleavage complex H protein] + CO2</text>
        <dbReference type="Rhea" id="RHEA:24304"/>
        <dbReference type="Rhea" id="RHEA-COMP:10494"/>
        <dbReference type="Rhea" id="RHEA-COMP:10495"/>
        <dbReference type="ChEBI" id="CHEBI:15378"/>
        <dbReference type="ChEBI" id="CHEBI:16526"/>
        <dbReference type="ChEBI" id="CHEBI:57305"/>
        <dbReference type="ChEBI" id="CHEBI:83099"/>
        <dbReference type="ChEBI" id="CHEBI:83143"/>
        <dbReference type="EC" id="1.4.4.2"/>
    </reaction>
</comment>
<comment type="cofactor">
    <cofactor evidence="1">
        <name>pyridoxal 5'-phosphate</name>
        <dbReference type="ChEBI" id="CHEBI:597326"/>
    </cofactor>
</comment>
<comment type="subunit">
    <text evidence="1">The glycine cleavage system is composed of four proteins: P, T, L and H.</text>
</comment>
<comment type="similarity">
    <text evidence="1">Belongs to the GcvP family.</text>
</comment>
<gene>
    <name evidence="1" type="primary">gcvP</name>
    <name type="ordered locus">SSON_3056</name>
</gene>
<dbReference type="EC" id="1.4.4.2" evidence="1"/>
<dbReference type="EMBL" id="CP000038">
    <property type="protein sequence ID" value="AAZ89645.1"/>
    <property type="molecule type" value="Genomic_DNA"/>
</dbReference>
<dbReference type="RefSeq" id="WP_000195067.1">
    <property type="nucleotide sequence ID" value="NC_007384.1"/>
</dbReference>
<dbReference type="SMR" id="Q3YXW7"/>
<dbReference type="KEGG" id="ssn:SSON_3056"/>
<dbReference type="HOGENOM" id="CLU_004620_1_1_6"/>
<dbReference type="Proteomes" id="UP000002529">
    <property type="component" value="Chromosome"/>
</dbReference>
<dbReference type="GO" id="GO:0005829">
    <property type="term" value="C:cytosol"/>
    <property type="evidence" value="ECO:0007669"/>
    <property type="project" value="TreeGrafter"/>
</dbReference>
<dbReference type="GO" id="GO:0005960">
    <property type="term" value="C:glycine cleavage complex"/>
    <property type="evidence" value="ECO:0007669"/>
    <property type="project" value="TreeGrafter"/>
</dbReference>
<dbReference type="GO" id="GO:0016594">
    <property type="term" value="F:glycine binding"/>
    <property type="evidence" value="ECO:0007669"/>
    <property type="project" value="TreeGrafter"/>
</dbReference>
<dbReference type="GO" id="GO:0004375">
    <property type="term" value="F:glycine dehydrogenase (decarboxylating) activity"/>
    <property type="evidence" value="ECO:0007669"/>
    <property type="project" value="UniProtKB-EC"/>
</dbReference>
<dbReference type="GO" id="GO:0030170">
    <property type="term" value="F:pyridoxal phosphate binding"/>
    <property type="evidence" value="ECO:0007669"/>
    <property type="project" value="TreeGrafter"/>
</dbReference>
<dbReference type="GO" id="GO:0019464">
    <property type="term" value="P:glycine decarboxylation via glycine cleavage system"/>
    <property type="evidence" value="ECO:0007669"/>
    <property type="project" value="UniProtKB-UniRule"/>
</dbReference>
<dbReference type="CDD" id="cd00613">
    <property type="entry name" value="GDC-P"/>
    <property type="match status" value="2"/>
</dbReference>
<dbReference type="FunFam" id="3.40.640.10:FF:000005">
    <property type="entry name" value="Glycine dehydrogenase (decarboxylating), mitochondrial"/>
    <property type="match status" value="1"/>
</dbReference>
<dbReference type="FunFam" id="3.90.1150.10:FF:000007">
    <property type="entry name" value="Glycine dehydrogenase (decarboxylating), mitochondrial"/>
    <property type="match status" value="1"/>
</dbReference>
<dbReference type="FunFam" id="3.40.640.10:FF:000007">
    <property type="entry name" value="glycine dehydrogenase (Decarboxylating), mitochondrial"/>
    <property type="match status" value="1"/>
</dbReference>
<dbReference type="Gene3D" id="3.90.1150.10">
    <property type="entry name" value="Aspartate Aminotransferase, domain 1"/>
    <property type="match status" value="1"/>
</dbReference>
<dbReference type="Gene3D" id="3.40.640.10">
    <property type="entry name" value="Type I PLP-dependent aspartate aminotransferase-like (Major domain)"/>
    <property type="match status" value="2"/>
</dbReference>
<dbReference type="HAMAP" id="MF_00711">
    <property type="entry name" value="GcvP"/>
    <property type="match status" value="1"/>
</dbReference>
<dbReference type="InterPro" id="IPR003437">
    <property type="entry name" value="GcvP"/>
</dbReference>
<dbReference type="InterPro" id="IPR049316">
    <property type="entry name" value="GDC-P_C"/>
</dbReference>
<dbReference type="InterPro" id="IPR049315">
    <property type="entry name" value="GDC-P_N"/>
</dbReference>
<dbReference type="InterPro" id="IPR020581">
    <property type="entry name" value="GDC_P"/>
</dbReference>
<dbReference type="InterPro" id="IPR015424">
    <property type="entry name" value="PyrdxlP-dep_Trfase"/>
</dbReference>
<dbReference type="InterPro" id="IPR015421">
    <property type="entry name" value="PyrdxlP-dep_Trfase_major"/>
</dbReference>
<dbReference type="InterPro" id="IPR015422">
    <property type="entry name" value="PyrdxlP-dep_Trfase_small"/>
</dbReference>
<dbReference type="NCBIfam" id="TIGR00461">
    <property type="entry name" value="gcvP"/>
    <property type="match status" value="1"/>
</dbReference>
<dbReference type="NCBIfam" id="NF003346">
    <property type="entry name" value="PRK04366.1"/>
    <property type="match status" value="1"/>
</dbReference>
<dbReference type="PANTHER" id="PTHR11773:SF13">
    <property type="entry name" value="GLYCINE DEHYDROGENASE (DECARBOXYLATING)"/>
    <property type="match status" value="1"/>
</dbReference>
<dbReference type="PANTHER" id="PTHR11773">
    <property type="entry name" value="GLYCINE DEHYDROGENASE, DECARBOXYLATING"/>
    <property type="match status" value="1"/>
</dbReference>
<dbReference type="Pfam" id="PF21478">
    <property type="entry name" value="GcvP2_C"/>
    <property type="match status" value="1"/>
</dbReference>
<dbReference type="Pfam" id="PF02347">
    <property type="entry name" value="GDC-P"/>
    <property type="match status" value="2"/>
</dbReference>
<dbReference type="SUPFAM" id="SSF53383">
    <property type="entry name" value="PLP-dependent transferases"/>
    <property type="match status" value="2"/>
</dbReference>
<keyword id="KW-0560">Oxidoreductase</keyword>
<keyword id="KW-0663">Pyridoxal phosphate</keyword>
<keyword id="KW-1185">Reference proteome</keyword>
<reference key="1">
    <citation type="journal article" date="2005" name="Nucleic Acids Res.">
        <title>Genome dynamics and diversity of Shigella species, the etiologic agents of bacillary dysentery.</title>
        <authorList>
            <person name="Yang F."/>
            <person name="Yang J."/>
            <person name="Zhang X."/>
            <person name="Chen L."/>
            <person name="Jiang Y."/>
            <person name="Yan Y."/>
            <person name="Tang X."/>
            <person name="Wang J."/>
            <person name="Xiong Z."/>
            <person name="Dong J."/>
            <person name="Xue Y."/>
            <person name="Zhu Y."/>
            <person name="Xu X."/>
            <person name="Sun L."/>
            <person name="Chen S."/>
            <person name="Nie H."/>
            <person name="Peng J."/>
            <person name="Xu J."/>
            <person name="Wang Y."/>
            <person name="Yuan Z."/>
            <person name="Wen Y."/>
            <person name="Yao Z."/>
            <person name="Shen Y."/>
            <person name="Qiang B."/>
            <person name="Hou Y."/>
            <person name="Yu J."/>
            <person name="Jin Q."/>
        </authorList>
    </citation>
    <scope>NUCLEOTIDE SEQUENCE [LARGE SCALE GENOMIC DNA]</scope>
    <source>
        <strain>Ss046</strain>
    </source>
</reference>
<feature type="chain" id="PRO_1000045619" description="Glycine dehydrogenase (decarboxylating)">
    <location>
        <begin position="1"/>
        <end position="957"/>
    </location>
</feature>
<feature type="modified residue" description="N6-(pyridoxal phosphate)lysine" evidence="1">
    <location>
        <position position="708"/>
    </location>
</feature>
<organism>
    <name type="scientific">Shigella sonnei (strain Ss046)</name>
    <dbReference type="NCBI Taxonomy" id="300269"/>
    <lineage>
        <taxon>Bacteria</taxon>
        <taxon>Pseudomonadati</taxon>
        <taxon>Pseudomonadota</taxon>
        <taxon>Gammaproteobacteria</taxon>
        <taxon>Enterobacterales</taxon>
        <taxon>Enterobacteriaceae</taxon>
        <taxon>Shigella</taxon>
    </lineage>
</organism>
<proteinExistence type="inferred from homology"/>
<evidence type="ECO:0000255" key="1">
    <source>
        <dbReference type="HAMAP-Rule" id="MF_00711"/>
    </source>
</evidence>